<keyword id="KW-0030">Aminoacyl-tRNA synthetase</keyword>
<keyword id="KW-0067">ATP-binding</keyword>
<keyword id="KW-0963">Cytoplasm</keyword>
<keyword id="KW-0436">Ligase</keyword>
<keyword id="KW-0479">Metal-binding</keyword>
<keyword id="KW-0547">Nucleotide-binding</keyword>
<keyword id="KW-0648">Protein biosynthesis</keyword>
<keyword id="KW-1185">Reference proteome</keyword>
<keyword id="KW-0694">RNA-binding</keyword>
<keyword id="KW-0820">tRNA-binding</keyword>
<keyword id="KW-0862">Zinc</keyword>
<protein>
    <recommendedName>
        <fullName evidence="1">Alanine--tRNA ligase</fullName>
        <ecNumber evidence="1">6.1.1.7</ecNumber>
    </recommendedName>
    <alternativeName>
        <fullName evidence="1">Alanyl-tRNA synthetase</fullName>
        <shortName evidence="1">AlaRS</shortName>
    </alternativeName>
</protein>
<feature type="chain" id="PRO_0000347483" description="Alanine--tRNA ligase">
    <location>
        <begin position="1"/>
        <end position="863"/>
    </location>
</feature>
<feature type="binding site" evidence="1">
    <location>
        <position position="552"/>
    </location>
    <ligand>
        <name>Zn(2+)</name>
        <dbReference type="ChEBI" id="CHEBI:29105"/>
    </ligand>
</feature>
<feature type="binding site" evidence="1">
    <location>
        <position position="556"/>
    </location>
    <ligand>
        <name>Zn(2+)</name>
        <dbReference type="ChEBI" id="CHEBI:29105"/>
    </ligand>
</feature>
<feature type="binding site" evidence="1">
    <location>
        <position position="656"/>
    </location>
    <ligand>
        <name>Zn(2+)</name>
        <dbReference type="ChEBI" id="CHEBI:29105"/>
    </ligand>
</feature>
<feature type="binding site" evidence="1">
    <location>
        <position position="660"/>
    </location>
    <ligand>
        <name>Zn(2+)</name>
        <dbReference type="ChEBI" id="CHEBI:29105"/>
    </ligand>
</feature>
<comment type="function">
    <text evidence="1">Catalyzes the attachment of alanine to tRNA(Ala) in a two-step reaction: alanine is first activated by ATP to form Ala-AMP and then transferred to the acceptor end of tRNA(Ala). Also edits incorrectly charged Ser-tRNA(Ala) and Gly-tRNA(Ala) via its editing domain.</text>
</comment>
<comment type="catalytic activity">
    <reaction evidence="1">
        <text>tRNA(Ala) + L-alanine + ATP = L-alanyl-tRNA(Ala) + AMP + diphosphate</text>
        <dbReference type="Rhea" id="RHEA:12540"/>
        <dbReference type="Rhea" id="RHEA-COMP:9657"/>
        <dbReference type="Rhea" id="RHEA-COMP:9923"/>
        <dbReference type="ChEBI" id="CHEBI:30616"/>
        <dbReference type="ChEBI" id="CHEBI:33019"/>
        <dbReference type="ChEBI" id="CHEBI:57972"/>
        <dbReference type="ChEBI" id="CHEBI:78442"/>
        <dbReference type="ChEBI" id="CHEBI:78497"/>
        <dbReference type="ChEBI" id="CHEBI:456215"/>
        <dbReference type="EC" id="6.1.1.7"/>
    </reaction>
</comment>
<comment type="cofactor">
    <cofactor evidence="1">
        <name>Zn(2+)</name>
        <dbReference type="ChEBI" id="CHEBI:29105"/>
    </cofactor>
    <text evidence="1">Binds 1 zinc ion per subunit.</text>
</comment>
<comment type="subcellular location">
    <subcellularLocation>
        <location evidence="1">Cytoplasm</location>
    </subcellularLocation>
</comment>
<comment type="domain">
    <text evidence="1">Consists of three domains; the N-terminal catalytic domain, the editing domain and the C-terminal C-Ala domain. The editing domain removes incorrectly charged amino acids, while the C-Ala domain, along with tRNA(Ala), serves as a bridge to cooperatively bring together the editing and aminoacylation centers thus stimulating deacylation of misacylated tRNAs.</text>
</comment>
<comment type="similarity">
    <text evidence="1">Belongs to the class-II aminoacyl-tRNA synthetase family.</text>
</comment>
<comment type="sequence caution" evidence="2">
    <conflict type="erroneous initiation">
        <sequence resource="EMBL-CDS" id="CAL17246"/>
    </conflict>
</comment>
<dbReference type="EC" id="6.1.1.7" evidence="1"/>
<dbReference type="EMBL" id="AM286690">
    <property type="protein sequence ID" value="CAL17246.1"/>
    <property type="status" value="ALT_INIT"/>
    <property type="molecule type" value="Genomic_DNA"/>
</dbReference>
<dbReference type="RefSeq" id="WP_041704981.1">
    <property type="nucleotide sequence ID" value="NC_008260.1"/>
</dbReference>
<dbReference type="SMR" id="Q0VNK2"/>
<dbReference type="STRING" id="393595.ABO_1798"/>
<dbReference type="KEGG" id="abo:ABO_1798"/>
<dbReference type="eggNOG" id="COG0013">
    <property type="taxonomic scope" value="Bacteria"/>
</dbReference>
<dbReference type="HOGENOM" id="CLU_004485_1_1_6"/>
<dbReference type="OrthoDB" id="9803884at2"/>
<dbReference type="Proteomes" id="UP000008871">
    <property type="component" value="Chromosome"/>
</dbReference>
<dbReference type="GO" id="GO:0005829">
    <property type="term" value="C:cytosol"/>
    <property type="evidence" value="ECO:0007669"/>
    <property type="project" value="TreeGrafter"/>
</dbReference>
<dbReference type="GO" id="GO:0004813">
    <property type="term" value="F:alanine-tRNA ligase activity"/>
    <property type="evidence" value="ECO:0007669"/>
    <property type="project" value="UniProtKB-UniRule"/>
</dbReference>
<dbReference type="GO" id="GO:0002161">
    <property type="term" value="F:aminoacyl-tRNA deacylase activity"/>
    <property type="evidence" value="ECO:0007669"/>
    <property type="project" value="TreeGrafter"/>
</dbReference>
<dbReference type="GO" id="GO:0005524">
    <property type="term" value="F:ATP binding"/>
    <property type="evidence" value="ECO:0007669"/>
    <property type="project" value="UniProtKB-UniRule"/>
</dbReference>
<dbReference type="GO" id="GO:0000049">
    <property type="term" value="F:tRNA binding"/>
    <property type="evidence" value="ECO:0007669"/>
    <property type="project" value="UniProtKB-KW"/>
</dbReference>
<dbReference type="GO" id="GO:0008270">
    <property type="term" value="F:zinc ion binding"/>
    <property type="evidence" value="ECO:0007669"/>
    <property type="project" value="UniProtKB-UniRule"/>
</dbReference>
<dbReference type="GO" id="GO:0006419">
    <property type="term" value="P:alanyl-tRNA aminoacylation"/>
    <property type="evidence" value="ECO:0007669"/>
    <property type="project" value="UniProtKB-UniRule"/>
</dbReference>
<dbReference type="GO" id="GO:0045892">
    <property type="term" value="P:negative regulation of DNA-templated transcription"/>
    <property type="evidence" value="ECO:0007669"/>
    <property type="project" value="TreeGrafter"/>
</dbReference>
<dbReference type="CDD" id="cd00673">
    <property type="entry name" value="AlaRS_core"/>
    <property type="match status" value="1"/>
</dbReference>
<dbReference type="FunFam" id="2.40.30.130:FF:000001">
    <property type="entry name" value="Alanine--tRNA ligase"/>
    <property type="match status" value="1"/>
</dbReference>
<dbReference type="FunFam" id="3.10.310.40:FF:000001">
    <property type="entry name" value="Alanine--tRNA ligase"/>
    <property type="match status" value="1"/>
</dbReference>
<dbReference type="FunFam" id="3.30.54.20:FF:000001">
    <property type="entry name" value="Alanine--tRNA ligase"/>
    <property type="match status" value="1"/>
</dbReference>
<dbReference type="FunFam" id="3.30.930.10:FF:000004">
    <property type="entry name" value="Alanine--tRNA ligase"/>
    <property type="match status" value="1"/>
</dbReference>
<dbReference type="FunFam" id="3.30.980.10:FF:000004">
    <property type="entry name" value="Alanine--tRNA ligase, cytoplasmic"/>
    <property type="match status" value="1"/>
</dbReference>
<dbReference type="Gene3D" id="2.40.30.130">
    <property type="match status" value="1"/>
</dbReference>
<dbReference type="Gene3D" id="3.10.310.40">
    <property type="match status" value="1"/>
</dbReference>
<dbReference type="Gene3D" id="3.30.54.20">
    <property type="match status" value="1"/>
</dbReference>
<dbReference type="Gene3D" id="6.10.250.550">
    <property type="match status" value="1"/>
</dbReference>
<dbReference type="Gene3D" id="3.30.930.10">
    <property type="entry name" value="Bira Bifunctional Protein, Domain 2"/>
    <property type="match status" value="1"/>
</dbReference>
<dbReference type="Gene3D" id="3.30.980.10">
    <property type="entry name" value="Threonyl-trna Synthetase, Chain A, domain 2"/>
    <property type="match status" value="1"/>
</dbReference>
<dbReference type="HAMAP" id="MF_00036_B">
    <property type="entry name" value="Ala_tRNA_synth_B"/>
    <property type="match status" value="1"/>
</dbReference>
<dbReference type="InterPro" id="IPR045864">
    <property type="entry name" value="aa-tRNA-synth_II/BPL/LPL"/>
</dbReference>
<dbReference type="InterPro" id="IPR002318">
    <property type="entry name" value="Ala-tRNA-lgiase_IIc"/>
</dbReference>
<dbReference type="InterPro" id="IPR018162">
    <property type="entry name" value="Ala-tRNA-ligase_IIc_anticod-bd"/>
</dbReference>
<dbReference type="InterPro" id="IPR018165">
    <property type="entry name" value="Ala-tRNA-synth_IIc_core"/>
</dbReference>
<dbReference type="InterPro" id="IPR018164">
    <property type="entry name" value="Ala-tRNA-synth_IIc_N"/>
</dbReference>
<dbReference type="InterPro" id="IPR050058">
    <property type="entry name" value="Ala-tRNA_ligase"/>
</dbReference>
<dbReference type="InterPro" id="IPR023033">
    <property type="entry name" value="Ala_tRNA_ligase_euk/bac"/>
</dbReference>
<dbReference type="InterPro" id="IPR003156">
    <property type="entry name" value="DHHA1_dom"/>
</dbReference>
<dbReference type="InterPro" id="IPR018163">
    <property type="entry name" value="Thr/Ala-tRNA-synth_IIc_edit"/>
</dbReference>
<dbReference type="InterPro" id="IPR009000">
    <property type="entry name" value="Transl_B-barrel_sf"/>
</dbReference>
<dbReference type="InterPro" id="IPR012947">
    <property type="entry name" value="tRNA_SAD"/>
</dbReference>
<dbReference type="NCBIfam" id="TIGR00344">
    <property type="entry name" value="alaS"/>
    <property type="match status" value="1"/>
</dbReference>
<dbReference type="PANTHER" id="PTHR11777:SF9">
    <property type="entry name" value="ALANINE--TRNA LIGASE, CYTOPLASMIC"/>
    <property type="match status" value="1"/>
</dbReference>
<dbReference type="PANTHER" id="PTHR11777">
    <property type="entry name" value="ALANYL-TRNA SYNTHETASE"/>
    <property type="match status" value="1"/>
</dbReference>
<dbReference type="Pfam" id="PF02272">
    <property type="entry name" value="DHHA1"/>
    <property type="match status" value="1"/>
</dbReference>
<dbReference type="Pfam" id="PF01411">
    <property type="entry name" value="tRNA-synt_2c"/>
    <property type="match status" value="1"/>
</dbReference>
<dbReference type="Pfam" id="PF07973">
    <property type="entry name" value="tRNA_SAD"/>
    <property type="match status" value="1"/>
</dbReference>
<dbReference type="PRINTS" id="PR00980">
    <property type="entry name" value="TRNASYNTHALA"/>
</dbReference>
<dbReference type="SMART" id="SM00863">
    <property type="entry name" value="tRNA_SAD"/>
    <property type="match status" value="1"/>
</dbReference>
<dbReference type="SUPFAM" id="SSF55681">
    <property type="entry name" value="Class II aaRS and biotin synthetases"/>
    <property type="match status" value="1"/>
</dbReference>
<dbReference type="SUPFAM" id="SSF101353">
    <property type="entry name" value="Putative anticodon-binding domain of alanyl-tRNA synthetase (AlaRS)"/>
    <property type="match status" value="1"/>
</dbReference>
<dbReference type="SUPFAM" id="SSF55186">
    <property type="entry name" value="ThrRS/AlaRS common domain"/>
    <property type="match status" value="1"/>
</dbReference>
<dbReference type="SUPFAM" id="SSF50447">
    <property type="entry name" value="Translation proteins"/>
    <property type="match status" value="1"/>
</dbReference>
<dbReference type="PROSITE" id="PS50860">
    <property type="entry name" value="AA_TRNA_LIGASE_II_ALA"/>
    <property type="match status" value="1"/>
</dbReference>
<sequence length="863" mass="93888">MKSAELRQAFLDYFASQGHTKVSSSSLVPANDPTLLFTNAGMNQFKDVFLGRESRDYTRATSSQRCVRAGGKHNDLENVGYTARHHTFFEMLGNFSFGDYFKREAIKFAWEFLTGTLGLPEERLWVTVHVSDDEAADIWLKEMGVSAERFSRLDEDNFWQMGDTGPCGPSSEIFYDHGADVPGGPPGSADEDLDRYIEIWNLVFMQYDRQPDGELQPLPKPSVDTGMGLERIAAVLQGVHSNYEIDLFQALLQAAAKATGCTDLEEKSLRVIADHIRSASFLICDGVIPSNEGRGYVLRRIIRRALRHGHKLGQDKPFFSTLVAALVAEMGEAYPELGREQARIEKALLAEEEQFGRTLAAGMKVLESAIEQLDGRVLPGDVLFNLYDTHGFPPDLTADVARERDLSVDMDGFEAAMAAQRERARGAGSFANDYSDRLNIDAITDFSGYEKLADDNTVVALYKDGAAVDTLNAGEEGMVVLDRTPFYAESGGQVGDTGALIADEARFMVTDTRKRQAAHVHVGKQVSGSLTIGGKVSACVDVDRRLAVMRNHSATHLMHAALRNVLGEHVQQKGSLVSADYLRFDFSHGEAVSEAQREEIEILVNRQILANTAVTTELMDIESAREAGAMALFGEKYDDQVRVLSMGSDGFSKELCGGTHVNRTGDIGLFRITLEASAAAGVRRIEAVTGEHALAVMRRQERALSEIAATVKSSLDNAADRVRSQAQKVRELEKEIERLKQKLASGAGGDLTSEVQDINGVKVLATQIDGADGKTLRVTMDKLKDKLGSAVIVLAAVEGEKVALVAGVTKDLTTKYKAGDLLKFVAEQVDGRGGGRPDMAQGGGNNPAALPGALESVKAWVAE</sequence>
<accession>Q0VNK2</accession>
<reference key="1">
    <citation type="journal article" date="2006" name="Nat. Biotechnol.">
        <title>Genome sequence of the ubiquitous hydrocarbon-degrading marine bacterium Alcanivorax borkumensis.</title>
        <authorList>
            <person name="Schneiker S."/>
            <person name="Martins dos Santos V.A.P."/>
            <person name="Bartels D."/>
            <person name="Bekel T."/>
            <person name="Brecht M."/>
            <person name="Buhrmester J."/>
            <person name="Chernikova T.N."/>
            <person name="Denaro R."/>
            <person name="Ferrer M."/>
            <person name="Gertler C."/>
            <person name="Goesmann A."/>
            <person name="Golyshina O.V."/>
            <person name="Kaminski F."/>
            <person name="Khachane A.N."/>
            <person name="Lang S."/>
            <person name="Linke B."/>
            <person name="McHardy A.C."/>
            <person name="Meyer F."/>
            <person name="Nechitaylo T."/>
            <person name="Puehler A."/>
            <person name="Regenhardt D."/>
            <person name="Rupp O."/>
            <person name="Sabirova J.S."/>
            <person name="Selbitschka W."/>
            <person name="Yakimov M.M."/>
            <person name="Timmis K.N."/>
            <person name="Vorhoelter F.-J."/>
            <person name="Weidner S."/>
            <person name="Kaiser O."/>
            <person name="Golyshin P.N."/>
        </authorList>
    </citation>
    <scope>NUCLEOTIDE SEQUENCE [LARGE SCALE GENOMIC DNA]</scope>
    <source>
        <strain>ATCC 700651 / DSM 11573 / NCIMB 13689 / SK2</strain>
    </source>
</reference>
<evidence type="ECO:0000255" key="1">
    <source>
        <dbReference type="HAMAP-Rule" id="MF_00036"/>
    </source>
</evidence>
<evidence type="ECO:0000305" key="2"/>
<proteinExistence type="inferred from homology"/>
<name>SYA_ALCBS</name>
<gene>
    <name evidence="1" type="primary">alaS</name>
    <name type="ordered locus">ABO_1798</name>
</gene>
<organism>
    <name type="scientific">Alcanivorax borkumensis (strain ATCC 700651 / DSM 11573 / NCIMB 13689 / SK2)</name>
    <dbReference type="NCBI Taxonomy" id="393595"/>
    <lineage>
        <taxon>Bacteria</taxon>
        <taxon>Pseudomonadati</taxon>
        <taxon>Pseudomonadota</taxon>
        <taxon>Gammaproteobacteria</taxon>
        <taxon>Oceanospirillales</taxon>
        <taxon>Alcanivoracaceae</taxon>
        <taxon>Alcanivorax</taxon>
    </lineage>
</organism>